<reference key="1">
    <citation type="submission" date="1991-04" db="EMBL/GenBank/DDBJ databases">
        <authorList>
            <person name="Brownlee G."/>
        </authorList>
    </citation>
    <scope>NUCLEOTIDE SEQUENCE [GENOMIC RNA]</scope>
    <source>
        <strain>A/NT/60/68</strain>
    </source>
</reference>
<organism>
    <name type="scientific">Influenza A virus (strain A/Northern Territory/60/1968 H3N2)</name>
    <name type="common">Influenza A virus (strain NT60)</name>
    <name type="synonym">Influenza A virus (strain A/NT/60/1968 H3N2)</name>
    <dbReference type="NCBI Taxonomy" id="384505"/>
    <lineage>
        <taxon>Viruses</taxon>
        <taxon>Riboviria</taxon>
        <taxon>Orthornavirae</taxon>
        <taxon>Negarnaviricota</taxon>
        <taxon>Polyploviricotina</taxon>
        <taxon>Insthoviricetes</taxon>
        <taxon>Articulavirales</taxon>
        <taxon>Orthomyxoviridae</taxon>
        <taxon>Alphainfluenzavirus</taxon>
        <taxon>Alphainfluenzavirus influenzae</taxon>
        <taxon>Influenza A virus</taxon>
    </lineage>
</organism>
<accession>Q76R37</accession>
<name>M1_I68A6</name>
<keyword id="KW-0025">Alternative splicing</keyword>
<keyword id="KW-1048">Host nucleus</keyword>
<keyword id="KW-0472">Membrane</keyword>
<keyword id="KW-0694">RNA-binding</keyword>
<keyword id="KW-0468">Viral matrix protein</keyword>
<keyword id="KW-0946">Virion</keyword>
<gene>
    <name evidence="1" type="primary">M</name>
</gene>
<evidence type="ECO:0000255" key="1">
    <source>
        <dbReference type="HAMAP-Rule" id="MF_04068"/>
    </source>
</evidence>
<protein>
    <recommendedName>
        <fullName evidence="1">Matrix protein 1</fullName>
        <shortName evidence="1">M1</shortName>
    </recommendedName>
</protein>
<sequence>MSLLTEVETYVLSIVPSGPLKAEIAQRLEDVFAGKNTDLEALMEWLKTRPILSPLTKGILGFVFTLTVPSERGLQRRRFVQNALNGNGDPNNMDRAVKLYRKLKREITFHGAKEIALSYSAGALASCMGLIYNRMGAVTTEVAFGLVCATCEQIADSQHRSHRQMVTTTNPLIRHENRMVLASTTAKAMEQMAGSSEQAAEAMEVASQARQMVQAMRAIGTHPRSSAGLKDDLLENLQAYQKRMGVQMQRFK</sequence>
<proteinExistence type="inferred from homology"/>
<organismHost>
    <name type="scientific">Aves</name>
    <dbReference type="NCBI Taxonomy" id="8782"/>
</organismHost>
<organismHost>
    <name type="scientific">Cetacea</name>
    <name type="common">whales</name>
    <dbReference type="NCBI Taxonomy" id="9721"/>
</organismHost>
<organismHost>
    <name type="scientific">Homo sapiens</name>
    <name type="common">Human</name>
    <dbReference type="NCBI Taxonomy" id="9606"/>
</organismHost>
<organismHost>
    <name type="scientific">Phocidae</name>
    <name type="common">true seals</name>
    <dbReference type="NCBI Taxonomy" id="9709"/>
</organismHost>
<organismHost>
    <name type="scientific">Sus scrofa</name>
    <name type="common">Pig</name>
    <dbReference type="NCBI Taxonomy" id="9823"/>
</organismHost>
<feature type="chain" id="PRO_0000326289" description="Matrix protein 1">
    <location>
        <begin position="1"/>
        <end position="252"/>
    </location>
</feature>
<feature type="region of interest" description="Membrane-binding" evidence="1">
    <location>
        <begin position="1"/>
        <end position="164"/>
    </location>
</feature>
<feature type="region of interest" description="RNP-binding" evidence="1">
    <location>
        <begin position="165"/>
        <end position="252"/>
    </location>
</feature>
<feature type="short sequence motif" description="Nuclear localization signal" evidence="1">
    <location>
        <begin position="101"/>
        <end position="105"/>
    </location>
</feature>
<comment type="function">
    <text evidence="1">Plays critical roles in virus replication, from virus entry and uncoating to assembly and budding of the virus particle. M1 binding to ribonucleocapsids (RNPs) in nucleus seems to inhibit viral transcription. Interaction of viral NEP with M1-RNP is thought to promote nuclear export of the complex, which is targeted to the virion assembly site at the apical plasma membrane in polarized epithelial cells. Interactions with NA and HA may bring M1, a non-raft-associated protein, into lipid rafts. Forms a continuous shell on the inner side of the lipid bilayer in virion, where it binds the RNP. During virus entry into cell, the M2 ion channel acidifies the internal virion core, inducing M1 dissociation from the RNP. M1-free RNPs are transported to the nucleus, where viral transcription and replication can take place.</text>
</comment>
<comment type="function">
    <text evidence="1">Determines the virion's shape: spherical or filamentous. Clinical isolates of influenza are characterized by the presence of significant proportion of filamentous virions, whereas after multiple passage on eggs or cell culture, virions have only spherical morphology. Filamentous virions are thought to be important to infect neighboring cells, and spherical virions more suited to spread through aerosol between hosts organisms.</text>
</comment>
<comment type="subunit">
    <text evidence="1">Homodimer and homomultimer. Interacts with NEP. Binds ribonucleocapsid by both interacting with genomic RNA and NP protein. May interact with HA and NA. Cannot bind NP without genomic RNA.</text>
</comment>
<comment type="subcellular location">
    <subcellularLocation>
        <location evidence="1">Virion membrane</location>
        <topology evidence="1">Peripheral membrane protein</topology>
        <orientation evidence="1">Cytoplasmic side</orientation>
    </subcellularLocation>
    <subcellularLocation>
        <location evidence="1">Host nucleus</location>
    </subcellularLocation>
</comment>
<comment type="alternative products">
    <event type="alternative splicing"/>
    <isoform>
        <id>Q76R37-1</id>
        <name>M1</name>
        <sequence type="displayed"/>
    </isoform>
    <isoform>
        <id>Q76R36-1</id>
        <name>M2</name>
        <sequence type="external"/>
    </isoform>
    <text>Only the first 9 residues are shared by the 2 isoforms.</text>
</comment>
<comment type="miscellaneous">
    <text evidence="1">Most abundant protein in virion. When expressed alone can form virus-like particles in transfected cells.</text>
</comment>
<comment type="similarity">
    <text evidence="1">Belongs to the influenza viruses Matrix protein M1 family.</text>
</comment>
<dbReference type="EMBL" id="X59240">
    <property type="protein sequence ID" value="CAA41928.1"/>
    <property type="molecule type" value="Genomic_RNA"/>
</dbReference>
<dbReference type="SMR" id="Q76R37"/>
<dbReference type="IntAct" id="Q76R37">
    <property type="interactions" value="1"/>
</dbReference>
<dbReference type="GO" id="GO:0042025">
    <property type="term" value="C:host cell nucleus"/>
    <property type="evidence" value="ECO:0007669"/>
    <property type="project" value="UniProtKB-SubCell"/>
</dbReference>
<dbReference type="GO" id="GO:0016020">
    <property type="term" value="C:membrane"/>
    <property type="evidence" value="ECO:0007669"/>
    <property type="project" value="UniProtKB-KW"/>
</dbReference>
<dbReference type="GO" id="GO:0055036">
    <property type="term" value="C:virion membrane"/>
    <property type="evidence" value="ECO:0007669"/>
    <property type="project" value="UniProtKB-SubCell"/>
</dbReference>
<dbReference type="GO" id="GO:0003723">
    <property type="term" value="F:RNA binding"/>
    <property type="evidence" value="ECO:0007669"/>
    <property type="project" value="UniProtKB-UniRule"/>
</dbReference>
<dbReference type="GO" id="GO:0039660">
    <property type="term" value="F:structural constituent of virion"/>
    <property type="evidence" value="ECO:0007669"/>
    <property type="project" value="UniProtKB-UniRule"/>
</dbReference>
<dbReference type="GO" id="GO:0046761">
    <property type="term" value="P:viral budding from plasma membrane"/>
    <property type="evidence" value="ECO:0007669"/>
    <property type="project" value="UniProtKB-UniRule"/>
</dbReference>
<dbReference type="FunFam" id="1.10.10.180:FF:000001">
    <property type="entry name" value="Matrix protein 1"/>
    <property type="match status" value="1"/>
</dbReference>
<dbReference type="FunFam" id="1.20.91.10:FF:000001">
    <property type="entry name" value="Matrix protein 1"/>
    <property type="match status" value="1"/>
</dbReference>
<dbReference type="Gene3D" id="1.10.10.180">
    <property type="match status" value="1"/>
</dbReference>
<dbReference type="Gene3D" id="1.20.91.10">
    <property type="match status" value="1"/>
</dbReference>
<dbReference type="HAMAP" id="MF_04068">
    <property type="entry name" value="INFV_M1"/>
    <property type="match status" value="1"/>
</dbReference>
<dbReference type="InterPro" id="IPR036039">
    <property type="entry name" value="Flu_matrix_M1"/>
</dbReference>
<dbReference type="InterPro" id="IPR013188">
    <property type="entry name" value="Flu_matrix_M1_C"/>
</dbReference>
<dbReference type="InterPro" id="IPR001561">
    <property type="entry name" value="Flu_matrix_M1_N"/>
</dbReference>
<dbReference type="InterPro" id="IPR015423">
    <property type="entry name" value="Flu_matrix_M1_N_sub1"/>
</dbReference>
<dbReference type="InterPro" id="IPR015799">
    <property type="entry name" value="Flu_matrix_M1_N_sub2"/>
</dbReference>
<dbReference type="InterPro" id="IPR037533">
    <property type="entry name" value="INFV_M1"/>
</dbReference>
<dbReference type="Pfam" id="PF00598">
    <property type="entry name" value="Flu_M1"/>
    <property type="match status" value="1"/>
</dbReference>
<dbReference type="Pfam" id="PF08289">
    <property type="entry name" value="Flu_M1_C"/>
    <property type="match status" value="1"/>
</dbReference>
<dbReference type="SMART" id="SM00759">
    <property type="entry name" value="Flu_M1_C"/>
    <property type="match status" value="1"/>
</dbReference>
<dbReference type="SUPFAM" id="SSF48145">
    <property type="entry name" value="Influenza virus matrix protein M1"/>
    <property type="match status" value="1"/>
</dbReference>